<protein>
    <recommendedName>
        <fullName evidence="1">High frequency lysogenization protein HflD homolog</fullName>
    </recommendedName>
</protein>
<proteinExistence type="inferred from homology"/>
<accession>B1KID1</accession>
<dbReference type="EMBL" id="CP000961">
    <property type="protein sequence ID" value="ACA86982.1"/>
    <property type="molecule type" value="Genomic_DNA"/>
</dbReference>
<dbReference type="RefSeq" id="WP_012325319.1">
    <property type="nucleotide sequence ID" value="NC_010506.1"/>
</dbReference>
<dbReference type="SMR" id="B1KID1"/>
<dbReference type="STRING" id="392500.Swoo_2706"/>
<dbReference type="KEGG" id="swd:Swoo_2706"/>
<dbReference type="eggNOG" id="COG2915">
    <property type="taxonomic scope" value="Bacteria"/>
</dbReference>
<dbReference type="HOGENOM" id="CLU_098920_0_0_6"/>
<dbReference type="Proteomes" id="UP000002168">
    <property type="component" value="Chromosome"/>
</dbReference>
<dbReference type="GO" id="GO:0005737">
    <property type="term" value="C:cytoplasm"/>
    <property type="evidence" value="ECO:0007669"/>
    <property type="project" value="UniProtKB-SubCell"/>
</dbReference>
<dbReference type="GO" id="GO:0005886">
    <property type="term" value="C:plasma membrane"/>
    <property type="evidence" value="ECO:0007669"/>
    <property type="project" value="UniProtKB-SubCell"/>
</dbReference>
<dbReference type="Gene3D" id="1.10.3890.10">
    <property type="entry name" value="HflD-like"/>
    <property type="match status" value="1"/>
</dbReference>
<dbReference type="HAMAP" id="MF_00695">
    <property type="entry name" value="HflD_protein"/>
    <property type="match status" value="1"/>
</dbReference>
<dbReference type="InterPro" id="IPR007451">
    <property type="entry name" value="HflD"/>
</dbReference>
<dbReference type="InterPro" id="IPR035932">
    <property type="entry name" value="HflD-like_sf"/>
</dbReference>
<dbReference type="NCBIfam" id="NF001246">
    <property type="entry name" value="PRK00218.1-2"/>
    <property type="match status" value="1"/>
</dbReference>
<dbReference type="NCBIfam" id="NF001248">
    <property type="entry name" value="PRK00218.1-4"/>
    <property type="match status" value="1"/>
</dbReference>
<dbReference type="PANTHER" id="PTHR38100">
    <property type="entry name" value="HIGH FREQUENCY LYSOGENIZATION PROTEIN HFLD"/>
    <property type="match status" value="1"/>
</dbReference>
<dbReference type="PANTHER" id="PTHR38100:SF1">
    <property type="entry name" value="HIGH FREQUENCY LYSOGENIZATION PROTEIN HFLD"/>
    <property type="match status" value="1"/>
</dbReference>
<dbReference type="Pfam" id="PF04356">
    <property type="entry name" value="DUF489"/>
    <property type="match status" value="1"/>
</dbReference>
<dbReference type="SUPFAM" id="SSF101322">
    <property type="entry name" value="YcfC-like"/>
    <property type="match status" value="1"/>
</dbReference>
<name>HFLD_SHEWM</name>
<sequence>MSELLDERTMAFAGILQAIGQVQHIARHGNSDNDSLAASLNTVLVTNPDSTSDVYADKTALNKGYQLIVNQLGDSKDKDVEITRYLVGILALERKLSRGNAMGLLAERINQVHRQLHHFSITDEQVIANFAGIYSDVISTLGPKIQISGNPEFLKQNQVQEKIRALLLSAMRSAVLWRQLGGKRRHLVFARKSILDIANKSLTL</sequence>
<feature type="chain" id="PRO_1000132303" description="High frequency lysogenization protein HflD homolog">
    <location>
        <begin position="1"/>
        <end position="204"/>
    </location>
</feature>
<keyword id="KW-0997">Cell inner membrane</keyword>
<keyword id="KW-1003">Cell membrane</keyword>
<keyword id="KW-0963">Cytoplasm</keyword>
<keyword id="KW-0472">Membrane</keyword>
<keyword id="KW-1185">Reference proteome</keyword>
<organism>
    <name type="scientific">Shewanella woodyi (strain ATCC 51908 / MS32)</name>
    <dbReference type="NCBI Taxonomy" id="392500"/>
    <lineage>
        <taxon>Bacteria</taxon>
        <taxon>Pseudomonadati</taxon>
        <taxon>Pseudomonadota</taxon>
        <taxon>Gammaproteobacteria</taxon>
        <taxon>Alteromonadales</taxon>
        <taxon>Shewanellaceae</taxon>
        <taxon>Shewanella</taxon>
    </lineage>
</organism>
<comment type="subcellular location">
    <subcellularLocation>
        <location>Cytoplasm</location>
    </subcellularLocation>
    <subcellularLocation>
        <location evidence="1">Cell inner membrane</location>
        <topology evidence="1">Peripheral membrane protein</topology>
        <orientation evidence="1">Cytoplasmic side</orientation>
    </subcellularLocation>
</comment>
<comment type="similarity">
    <text evidence="1">Belongs to the HflD family.</text>
</comment>
<evidence type="ECO:0000255" key="1">
    <source>
        <dbReference type="HAMAP-Rule" id="MF_00695"/>
    </source>
</evidence>
<gene>
    <name evidence="1" type="primary">hflD</name>
    <name type="ordered locus">Swoo_2706</name>
</gene>
<reference key="1">
    <citation type="submission" date="2008-02" db="EMBL/GenBank/DDBJ databases">
        <title>Complete sequence of Shewanella woodyi ATCC 51908.</title>
        <authorList>
            <consortium name="US DOE Joint Genome Institute"/>
            <person name="Copeland A."/>
            <person name="Lucas S."/>
            <person name="Lapidus A."/>
            <person name="Glavina del Rio T."/>
            <person name="Dalin E."/>
            <person name="Tice H."/>
            <person name="Bruce D."/>
            <person name="Goodwin L."/>
            <person name="Pitluck S."/>
            <person name="Sims D."/>
            <person name="Brettin T."/>
            <person name="Detter J.C."/>
            <person name="Han C."/>
            <person name="Kuske C.R."/>
            <person name="Schmutz J."/>
            <person name="Larimer F."/>
            <person name="Land M."/>
            <person name="Hauser L."/>
            <person name="Kyrpides N."/>
            <person name="Lykidis A."/>
            <person name="Zhao J.-S."/>
            <person name="Richardson P."/>
        </authorList>
    </citation>
    <scope>NUCLEOTIDE SEQUENCE [LARGE SCALE GENOMIC DNA]</scope>
    <source>
        <strain>ATCC 51908 / MS32</strain>
    </source>
</reference>